<evidence type="ECO:0000250" key="1">
    <source>
        <dbReference type="UniProtKB" id="Q13616"/>
    </source>
</evidence>
<evidence type="ECO:0000250" key="2">
    <source>
        <dbReference type="UniProtKB" id="Q13618"/>
    </source>
</evidence>
<evidence type="ECO:0000255" key="3"/>
<evidence type="ECO:0000255" key="4">
    <source>
        <dbReference type="PROSITE-ProRule" id="PRU00330"/>
    </source>
</evidence>
<evidence type="ECO:0000256" key="5">
    <source>
        <dbReference type="SAM" id="MobiDB-lite"/>
    </source>
</evidence>
<evidence type="ECO:0000269" key="6">
    <source>
    </source>
</evidence>
<evidence type="ECO:0000269" key="7">
    <source>
    </source>
</evidence>
<evidence type="ECO:0000269" key="8">
    <source>
    </source>
</evidence>
<evidence type="ECO:0000269" key="9">
    <source>
    </source>
</evidence>
<evidence type="ECO:0000269" key="10">
    <source>
    </source>
</evidence>
<evidence type="ECO:0000269" key="11">
    <source>
    </source>
</evidence>
<evidence type="ECO:0000269" key="12">
    <source>
    </source>
</evidence>
<evidence type="ECO:0000269" key="13">
    <source>
    </source>
</evidence>
<evidence type="ECO:0000269" key="14">
    <source>
    </source>
</evidence>
<evidence type="ECO:0000269" key="15">
    <source>
    </source>
</evidence>
<evidence type="ECO:0007829" key="16">
    <source>
        <dbReference type="PDB" id="1IUY"/>
    </source>
</evidence>
<organism>
    <name type="scientific">Mus musculus</name>
    <name type="common">Mouse</name>
    <dbReference type="NCBI Taxonomy" id="10090"/>
    <lineage>
        <taxon>Eukaryota</taxon>
        <taxon>Metazoa</taxon>
        <taxon>Chordata</taxon>
        <taxon>Craniata</taxon>
        <taxon>Vertebrata</taxon>
        <taxon>Euteleostomi</taxon>
        <taxon>Mammalia</taxon>
        <taxon>Eutheria</taxon>
        <taxon>Euarchontoglires</taxon>
        <taxon>Glires</taxon>
        <taxon>Rodentia</taxon>
        <taxon>Myomorpha</taxon>
        <taxon>Muroidea</taxon>
        <taxon>Muridae</taxon>
        <taxon>Murinae</taxon>
        <taxon>Mus</taxon>
        <taxon>Mus</taxon>
    </lineage>
</organism>
<proteinExistence type="evidence at protein level"/>
<accession>Q9JLV5</accession>
<reference key="1">
    <citation type="submission" date="1999-02" db="EMBL/GenBank/DDBJ databases">
        <authorList>
            <person name="Levy N."/>
            <person name="Agulnik A.I."/>
            <person name="Boettger-Tong H."/>
            <person name="Bishop C.E."/>
        </authorList>
    </citation>
    <scope>NUCLEOTIDE SEQUENCE [MRNA]</scope>
    <source>
        <strain>C57BL/6J</strain>
    </source>
</reference>
<reference key="2">
    <citation type="journal article" date="2004" name="Genome Res.">
        <title>The status, quality, and expansion of the NIH full-length cDNA project: the Mammalian Gene Collection (MGC).</title>
        <authorList>
            <consortium name="The MGC Project Team"/>
        </authorList>
    </citation>
    <scope>NUCLEOTIDE SEQUENCE [LARGE SCALE MRNA]</scope>
    <source>
        <strain>FVB/N</strain>
        <tissue>Mammary gland</tissue>
    </source>
</reference>
<reference key="3">
    <citation type="journal article" date="1999" name="Genes Dev.">
        <title>Cullin-3 targets cyclin E for ubiquitination and controls S phase in mammalian cells.</title>
        <authorList>
            <person name="Singer J.D."/>
            <person name="Gurian-West M."/>
            <person name="Clurman B."/>
            <person name="Roberts J.M."/>
        </authorList>
    </citation>
    <scope>SUBCELLULAR LOCATION</scope>
    <scope>INTERACTION WITH CYCE</scope>
    <scope>TISSUE SPECIFICITY</scope>
    <scope>DISRUPTION PHENOTYPE</scope>
</reference>
<reference key="4">
    <citation type="journal article" date="2002" name="Proc. Natl. Acad. Sci. U.S.A.">
        <title>Direct evidence that sulfhydryl groups of Keap1 are the sensors regulating induction of phase 2 enzymes that protect against carcinogens and oxidants.</title>
        <authorList>
            <person name="Dinkova-Kostova A.T."/>
            <person name="Holtzclaw W.D."/>
            <person name="Cole R.N."/>
            <person name="Itoh K."/>
            <person name="Wakabayashi N."/>
            <person name="Katoh Y."/>
            <person name="Yamamoto M."/>
            <person name="Talalay P."/>
        </authorList>
    </citation>
    <scope>FUNCTION OF THE BCR(KEAP1) COMPLEX</scope>
</reference>
<reference key="5">
    <citation type="journal article" date="2004" name="Proc. Natl. Acad. Sci. U.S.A.">
        <title>Protection against electrophile and oxidant stress by induction of the phase 2 response: fate of cysteines of the Keap1 sensor modified by inducers.</title>
        <authorList>
            <person name="Wakabayashi N."/>
            <person name="Dinkova-Kostova A.T."/>
            <person name="Holtzclaw W.D."/>
            <person name="Kang M.I."/>
            <person name="Kobayashi A."/>
            <person name="Yamamoto M."/>
            <person name="Kensler T.W."/>
            <person name="Talalay P."/>
        </authorList>
    </citation>
    <scope>FUNCTION OF THE BCR(KEAP1) COMPLEX</scope>
</reference>
<reference key="6">
    <citation type="journal article" date="2004" name="Mol. Cell. Biol.">
        <title>Oxidative stress sensor Keap1 functions as an adaptor for Cul3-based E3 ligase to regulate proteasomal degradation of Nrf2.</title>
        <authorList>
            <person name="Kobayashi A."/>
            <person name="Kang M.I."/>
            <person name="Okawa H."/>
            <person name="Ohtsuji M."/>
            <person name="Zenke Y."/>
            <person name="Chiba T."/>
            <person name="Igarashi K."/>
            <person name="Yamamoto M."/>
        </authorList>
    </citation>
    <scope>FUNCTION OF THE BCR(KEAP1) COMPLEX</scope>
    <scope>IDENTIFICATION IN THE BCR(KEAP1) COMPLEX</scope>
</reference>
<reference key="7">
    <citation type="journal article" date="2006" name="Biol. Reprod.">
        <title>Cullin3 is a KLHL10-interacting protein preferentially expressed during late spermiogenesis.</title>
        <authorList>
            <person name="Wang S."/>
            <person name="Zheng H."/>
            <person name="Esaki Y."/>
            <person name="Kelly F."/>
            <person name="Yan W."/>
        </authorList>
    </citation>
    <scope>TISSUE SPECIFICITY</scope>
    <scope>INTERACTION WITH KLHL10</scope>
</reference>
<reference key="8">
    <citation type="journal article" date="2006" name="J. Biol. Chem.">
        <title>Dimerization of substrate adaptors can facilitate cullin-mediated ubiquitylation of proteins by a 'tethering' mechanism: a two-site interaction model for the Nrf2-Keap1 complex.</title>
        <authorList>
            <person name="McMahon M."/>
            <person name="Thomas N."/>
            <person name="Itoh K."/>
            <person name="Yamamoto M."/>
            <person name="Hayes J.D."/>
        </authorList>
    </citation>
    <scope>IDENTIFICATION IN THE BCR(KEAP1) COMPLEX</scope>
</reference>
<reference key="9">
    <citation type="journal article" date="2010" name="Cell">
        <title>A tissue-specific atlas of mouse protein phosphorylation and expression.</title>
        <authorList>
            <person name="Huttlin E.L."/>
            <person name="Jedrychowski M.P."/>
            <person name="Elias J.E."/>
            <person name="Goswami T."/>
            <person name="Rad R."/>
            <person name="Beausoleil S.A."/>
            <person name="Villen J."/>
            <person name="Haas W."/>
            <person name="Sowa M.E."/>
            <person name="Gygi S.P."/>
        </authorList>
    </citation>
    <scope>IDENTIFICATION BY MASS SPECTROMETRY [LARGE SCALE ANALYSIS]</scope>
    <source>
        <tissue>Brain</tissue>
        <tissue>Brown adipose tissue</tissue>
        <tissue>Heart</tissue>
        <tissue>Kidney</tissue>
        <tissue>Liver</tissue>
        <tissue>Lung</tissue>
        <tissue>Pancreas</tissue>
        <tissue>Spleen</tissue>
        <tissue>Testis</tissue>
    </source>
</reference>
<reference key="10">
    <citation type="journal article" date="2012" name="Nature">
        <title>Ubiquitin-dependent regulation of COPII coat size and function.</title>
        <authorList>
            <person name="Jin L."/>
            <person name="Pahuja K.B."/>
            <person name="Wickliffe K.E."/>
            <person name="Gorur A."/>
            <person name="Baumgartel C."/>
            <person name="Schekman R."/>
            <person name="Rape M."/>
        </authorList>
    </citation>
    <scope>FUNCTION</scope>
    <scope>DISRUPTION PHENOTYPE</scope>
</reference>
<reference key="11">
    <citation type="journal article" date="2016" name="Mol. Cell. Biol.">
        <title>Absolute Amounts and Status of the Nrf2-Keap1-Cul3 Complex within Cells.</title>
        <authorList>
            <person name="Iso T."/>
            <person name="Suzuki T."/>
            <person name="Baird L."/>
            <person name="Yamamoto M."/>
        </authorList>
    </citation>
    <scope>IDENTIFICATION IN THE BCR(KEAP1) COMPLEX</scope>
</reference>
<reference key="12">
    <citation type="journal article" date="2016" name="Proc. Natl. Acad. Sci. U.S.A.">
        <title>Insulin resistance and diabetes caused by genetic or diet-induced KBTBD2 deficiency in mice.</title>
        <authorList>
            <person name="Zhang Z."/>
            <person name="Turer E."/>
            <person name="Li X."/>
            <person name="Zhan X."/>
            <person name="Choi M."/>
            <person name="Tang M."/>
            <person name="Press A."/>
            <person name="Smith S.R."/>
            <person name="Divoux A."/>
            <person name="Moresco E.M."/>
            <person name="Beutler B."/>
        </authorList>
    </citation>
    <scope>IDENTIFICATION IN BCR(KBTBD2) E3 UBIQUITIN LIGASE COMPLEX</scope>
</reference>
<reference key="13">
    <citation type="journal article" date="2021" name="Elife">
        <title>ACLY ubiquitination by CUL3-KLHL25 induces the reprogramming of fatty acid metabolism to facilitate iTreg differentiation.</title>
        <authorList>
            <person name="Tian M."/>
            <person name="Hao F."/>
            <person name="Jin X."/>
            <person name="Sun X."/>
            <person name="Jiang Y."/>
            <person name="Wang Y."/>
            <person name="Li D."/>
            <person name="Chang T."/>
            <person name="Zou Y."/>
            <person name="Peng P."/>
            <person name="Xia C."/>
            <person name="Liu J."/>
            <person name="Li Y."/>
            <person name="Wang P."/>
            <person name="Feng Y."/>
            <person name="Wei M."/>
        </authorList>
    </citation>
    <scope>FUNCTION</scope>
    <scope>PATHWAY</scope>
    <scope>IDENTIFICATION IN THE BCR(KLHL25) UBIQUITIN LIGASE COMPLEX</scope>
</reference>
<reference key="14">
    <citation type="submission" date="2003-10" db="PDB data bank">
        <title>Solution structure of the cullin-3 homologue.</title>
        <authorList>
            <consortium name="RIKEN structural genomics initiative (RSGI)"/>
        </authorList>
    </citation>
    <scope>STRUCTURE BY NMR OF 678-768</scope>
</reference>
<keyword id="KW-0002">3D-structure</keyword>
<keyword id="KW-0007">Acetylation</keyword>
<keyword id="KW-0131">Cell cycle</keyword>
<keyword id="KW-0132">Cell division</keyword>
<keyword id="KW-0966">Cell projection</keyword>
<keyword id="KW-0969">Cilium</keyword>
<keyword id="KW-0970">Cilium biogenesis/degradation</keyword>
<keyword id="KW-0963">Cytoplasm</keyword>
<keyword id="KW-0206">Cytoskeleton</keyword>
<keyword id="KW-0931">ER-Golgi transport</keyword>
<keyword id="KW-0282">Flagellum</keyword>
<keyword id="KW-0333">Golgi apparatus</keyword>
<keyword id="KW-1017">Isopeptide bond</keyword>
<keyword id="KW-0498">Mitosis</keyword>
<keyword id="KW-0539">Nucleus</keyword>
<keyword id="KW-0597">Phosphoprotein</keyword>
<keyword id="KW-1185">Reference proteome</keyword>
<keyword id="KW-0813">Transport</keyword>
<keyword id="KW-0832">Ubl conjugation</keyword>
<keyword id="KW-0833">Ubl conjugation pathway</keyword>
<comment type="function">
    <text evidence="2 7 8 9 12 15">Core component of multiple cullin-RING-based BCR (BTB-CUL3-RBX1) E3 ubiquitin-protein ligase complexes which mediate the ubiquitination and subsequent proteasomal degradation of target proteins (By similarity). BCR complexes and ARIH1 collaborate in tandem to mediate ubiquitination of target proteins (By similarity). As a scaffold protein may contribute to catalysis through positioning of the substrate and the ubiquitin-conjugating enzyme (By similarity). The E3 ubiquitin-protein ligase activity of the complex is dependent on the neddylation of the cullin subunit and is inhibited by the association of the deneddylated cullin subunit with TIP120A/CAND1 (By similarity). The functional specificity of the BCR complex depends on the BTB domain-containing protein as the substrate recognition component (By similarity). BCR(KLHL42) is involved in ubiquitination of KATNA1 (By similarity). BCR(SPOP) is involved in ubiquitination of BMI1/PCGF4, BRMS1, MACROH2A1 and DAXX, GLI2 and GLI3 (By similarity). Can also form a cullin-RING-based BCR (BTB-CUL3-RBX1) E3 ubiquitin-protein ligase complex containing homodimeric SPOPL or the heterodimer formed by SPOP and SPOPL; these complexes have lower ubiquitin ligase activity (By similarity). BCR(KLHL9-KLHL13) controls the dynamic behavior of AURKB on mitotic chromosomes and thereby coordinates faithful mitotic progression and completion of cytokinesis (By similarity). BCR(KLHL12) is involved in ER-Golgi transport by regulating the size of COPII coats, thereby playing a key role in collagen export, which is required for embryonic stem (ES) cells division: BCR(KLHL12) acts by mediating monoubiquitination of SEC31 (SEC31A or SEC31B) (PubMed:22358839). BCR(KLHL3) acts as a regulator of ion transport in the distal nephron; by mediating ubiquitination of WNK4 (By similarity). The BCR(KLHL20) E3 ubiquitin ligase complex is involved in interferon response and anterograde Golgi to endosome transport: it mediates both ubiquitination leading to degradation and 'Lys-33'-linked ubiquitination (By similarity). The BCR(KLHL21) E3 ubiquitin ligase complex regulates localization of the chromosomal passenger complex (CPC) from chromosomes to the spindle midzone in anaphase and mediates the ubiquitination of AURKB (By similarity). The BCR(KLHL22) ubiquitin ligase complex mediates monoubiquitination of PLK1, leading to PLK1 dissociation from phosphoreceptor proteins and subsequent removal from kinetochores, allowing silencing of the spindle assembly checkpoint (SAC) and chromosome segregation. The BCR(KLHL22) ubiquitin ligase complex is also responsible for the amino acid-stimulated 'Lys-48' polyubiquitination and proteasomal degradation of DEPDC5. Through the degradation of DEPDC5, releases the GATOR1 complex-mediated inhibition of the TORC1 pathway (By similarity). The BCR(KLHL25) ubiquitin ligase complex is involved in translational homeostasis by mediating ubiquitination and subsequent degradation of hypophosphorylated EIF4EBP1 (4E-BP1) (By similarity). The BCR(KLHL25) ubiquitin ligase complex is also involved in lipid synthesis by mediating ubiquitination and degradation of ACLY (PubMed:34491895). The BCR(KBTBD8) complex acts by mediating monoubiquitination of NOLC1 and TCOF1, leading to remodel the translational program of differentiating cells in favor of neural crest specification (By similarity). Involved in ubiquitination of cyclin E and of cyclin D1 (in vitro) thus involved in regulation of G1/S transition (By similarity). Involved in the ubiquitination of KEAP1, ENC1 and KLHL41 (By similarity). In concert with ATF2 and RBX1, promotes degradation of KAT5 thereby attenuating its ability to acetylate and activate ATM (By similarity). The BCR(KCTD17) E3 ubiquitin ligase complex mediates ubiquitination and degradation of TCHP, a down-regulator of cilium assembly, thereby inducing ciliogenesis (By similarity). The BCR(KLHL24) E3 ubiquitin ligase complex mediates ubiquitination of KRT14, controls KRT14 levels during keratinocytes differentiation, and is essential for skin integrity (By similarity). The BCR(KLHL18) E3 ubiquitin ligase complex mediates the ubiquitination of AURKA leading to its activation at the centrosome which is required for initiating mitotic entry (By similarity). The BCR(KEAP1) E3 ubiquitin ligase complex acts as a key sensor of oxidative and electrophilic stress by mediating ubiquitination and degradation of NFE2L2/NRF2, a transcription factor regulating expression of many cytoprotective genes (PubMed:12193649, PubMed:14764894, PubMed:15282312). As part of the CUL3(KBTBD6/7) E3 ubiquitin ligase complex functions mediates 'Lys-48' ubiquitination and proteasomal degradation of TIAM1. By controlling the ubiquitination of that RAC1 guanine exchange factors (GEF), regulates RAC1 signal transduction and downstream biological processes including the organization of the cytoskeleton, cell migration and cell proliferation (By similarity). The BCR(KBTBD4) E3 ubiquitin ligase complex targets CoREST corepressor complex components RCOR1, KDM1A/LSD1 and HDAC2 for proteasomal degradation with RCOR1 likely to be the primary target while degradation of KDM1A and HDAC2 is likely due to their association with RCOR1 (By similarity). It also targets RCOR3, MIER2 and MIER3 for proteasomal degradation as well as associated proteins ZNF217 and RREB1 with degradation being dependent on the presence of an ELM2 domain in the target proteins (By similarity). The BCR(ARMC5) complex mediates premature transcription termination of transcripts that are unfavorably configured for transcriptional elongation by mediating ubiquitination of Pol II subunit POLR2A (By similarity). Required for 'Lys-63'-linked ubiquitination of large ribosomal subunit protein MRPL12 (By similarity).</text>
</comment>
<comment type="pathway">
    <text evidence="15">Protein modification; protein ubiquitination.</text>
</comment>
<comment type="subunit">
    <text evidence="2 6 9 10 11 13 14 15">Forms neddylation-dependent homodimers (By similarity). Component of multiple BCR (BTB-CUL3-RBX1) E3 ubiquitin-protein ligase complexes formed of CUL3, RBX1 and a variable BTB domain-containing protein acting as both, adapter to cullin and substrate recognition subunit (By similarity). The BCR complex may be active as a heterodimeric complex, in which NEDD8, covalently attached to one CUL3 molecule, binds to the C-terminus of a second CUL3 molecule (By similarity). Interacts with RBX1, RNF7 and TIP120A/CAND1 (By similarity). Part of the BCR(SPOP) containing SPOP, and of BCR containing homodimeric SPOPL or the heterodimer formed by SPOP and SPOPL (By similarity). Part of the probable BCR(KLHL9-KLHL13) complex with BTB domain proteins KLHL9 and KLHL13 (By similarity). Part of the BCR(KLHL41) complex containing KLHL41 (By similarity). Component of the BCR(KLHL12) E3 ubiquitin ligase complex, at least composed of CUL3 and KLHL12 and RBX1 (By similarity). Component of the BCR(KLHL3) E3 ubiquitin ligase complex, at least composed of CUL3 and KLHL3 and RBX1 (By similarity). Part of the BCR(ENC1) complex containing ENC1 (By similarity). Part of a complex consisting of BMI1/PCGF4, CUL3 and SPOP (By similarity). Part of a complex consisting of BRMS1, CUL3 and SPOP (By similarity). Component of the BCR(KLHL21) E3 ubiquitin ligase complex, at least composed of CUL3, KLHL21 and RBX1 (By similarity). Component of the BCR(KLHL22) E3 ubiquitin ligase complex, at least composed of CUL3, KLHL22 and RBX1 (By similarity). Component of the BCR(KLHL25) E3 ubiquitin ligase complex, at least composed of CUL3, KLHL25 and RBX1 (PubMed:34491895). Part of a complex consisting of MACROH2A1, CUL3 and SPOP (By similarity). Component of the BCR(KLHL42) E3 ubiquitin ligase complex, at least composed of CUL3 and KLHL42 (By similarity). Component of the BCR(KBTBD8) E3 ubiquitin ligase complex, at least composed of CUL3, KBTBD8 and RBX1 (By similarity). Interacts with KLHL42 (via the BTB domain) (By similarity). Interacts with KATNA1; the interaction is enhanced by KLHL42 (By similarity). Interacts with KCTD5, KLHL9, KLHL11, KLHL13, GAN, ZBTB16, KLHL3, KLHL15, KLHL20, KLHL36, GMCL2, BTBD1 (By similarity). Part of a complex that contains CUL3, RBX1 and GAN (By similarity). Interacts (via BTB domain) with KLHL17; the interaction regulates surface GRIK2 expression (By similarity). Interacts with KCTD7 (By similarity). Part of the BCR(GAN) complex containing GAN (By similarity). Part of the BCR(KEAP1) complex containing KEAP1 (PubMed:15282312, PubMed:16790436, PubMed:27697860). Interacts with KAT5 and ATF2 (By similarity). Interacts with KCTD17 in the BCR(KCTD17) E3 ubiquitin ligase complex, at least composed of CUL3, KCTD17 and RBX1 (By similarity). Interacts (when neddylated) with ARIH1; leading to activate the E3 ligase activity of ARIH1 (By similarity). Interacts with COPS9 (By similarity). Interacts with PPP2R5B; this interaction is indirect and mediated through KLHL15-binding and leads to PPP2R5B proteasomal degradation (By similarity). Interacts with RBBP8/CtIP; this interaction is indirect and mediated through KLHL15-binding and leads to RBBP8 proteasomal degradation (By similarity). Interacts with KLHL24 in the BCR(KLHL24) E3 ubiquitin ligase complex, composed of CUL3, RBX1 and KLHL24 (By similarity). Interacts with RHOBTB2 (By similarity). Interacts with CYCE (PubMed:10500095). Interacts with KLHL10 (PubMed:16162871). Interacts with AURKA and KLHL18 (via BTB domain) (By similarity). Interacts (unneddylated form) with DCUN1D1, DCUN1D2, DCUN1D3, DCUN1D4 and DCUN1D5; these interactions promote the cullin neddylation (By similarity). Component of a BCR3 (BTB-CUL3-RBX1) E3 ubiquitin ligase complex, also named Cul3-RING ubiquitin ligase complex CUL3(KBTBD6/7), composed of CUL3, RBX1, KBTBD6 and KBTBD7 (By similarity). Component of the BCR(KBTBD2) E3 ubiquitin ligase complex, at least composed of CUL3, KBTBD2 and RBX1. Interacts with KBTBD2 (via the BTB domain) (PubMed:27708159). Component of the BCR(KBTBD4) E3 ubiquitin ligase complex, at least composed of CUL3, KBTBD4 and RBX1 (By similarity).</text>
</comment>
<comment type="subcellular location">
    <subcellularLocation>
        <location evidence="6">Nucleus</location>
    </subcellularLocation>
    <subcellularLocation>
        <location evidence="6">Golgi apparatus</location>
    </subcellularLocation>
    <subcellularLocation>
        <location evidence="2">Cell projection</location>
        <location evidence="2">Cilium</location>
        <location evidence="2">Flagellum</location>
    </subcellularLocation>
    <subcellularLocation>
        <location evidence="2">Cytoplasm</location>
    </subcellularLocation>
    <subcellularLocation>
        <location evidence="2">Cytoplasm</location>
        <location evidence="2">Cytoskeleton</location>
        <location evidence="2">Spindle</location>
    </subcellularLocation>
    <subcellularLocation>
        <location>Cytoplasm</location>
    </subcellularLocation>
    <subcellularLocation>
        <location evidence="2">Cytoplasm</location>
        <location evidence="2">Cytoskeleton</location>
        <location evidence="2">Microtubule organizing center</location>
        <location evidence="2">Centrosome</location>
    </subcellularLocation>
    <subcellularLocation>
        <location evidence="2">Cytoplasm</location>
        <location evidence="2">Cytoskeleton</location>
        <location evidence="2">Spindle pole</location>
    </subcellularLocation>
    <text evidence="2">Detected along the length of the sperm flagellum and in the cytoplasm of the germ cells. Predominantly found in the nucleus in interphase cells, found at the centrosome at late G2 or prophase, starts accumulating at the spindle poles in prometaphase and stays on the spindle poles and the mitotic spindle at metaphase.</text>
</comment>
<comment type="tissue specificity">
    <text evidence="6 10">Widely expressed, with highest expression in brain, spleen and testis. In the testis, it is mainly expressed in spermatids.</text>
</comment>
<comment type="PTM">
    <text evidence="2">Neddylated. Attachment of NEDD8 is required for the E3 ubiquitin-protein ligase activity of the BCR complex. Deneddylated via its interaction with the COP9 signalosome (CSN) complex.</text>
</comment>
<comment type="disruption phenotype">
    <text evidence="6 12">Null deficient mice are not viable. Extraembryonic ectoderm shows a greatly increased number of cells in S phase. In the trophectoderm cells are blocked to entry into S phase. Embryonic stem (ES) cells form tightly packed cell clusters with prominent actin cables and aberrant adhesions. ES cells are retained in proliferation, yet retain their pluripotency.</text>
</comment>
<comment type="similarity">
    <text evidence="4">Belongs to the cullin family.</text>
</comment>
<gene>
    <name type="primary">Cul3</name>
</gene>
<dbReference type="EMBL" id="AF129738">
    <property type="protein sequence ID" value="AAF36500.1"/>
    <property type="molecule type" value="mRNA"/>
</dbReference>
<dbReference type="EMBL" id="BC027304">
    <property type="protein sequence ID" value="AAH27304.1"/>
    <property type="molecule type" value="mRNA"/>
</dbReference>
<dbReference type="CCDS" id="CCDS15094.1"/>
<dbReference type="RefSeq" id="NP_001300657.1">
    <property type="nucleotide sequence ID" value="NM_001313728.1"/>
</dbReference>
<dbReference type="RefSeq" id="NP_057925.1">
    <property type="nucleotide sequence ID" value="NM_016716.6"/>
</dbReference>
<dbReference type="PDB" id="1IUY">
    <property type="method" value="NMR"/>
    <property type="chains" value="A=678-768"/>
</dbReference>
<dbReference type="PDBsum" id="1IUY"/>
<dbReference type="SMR" id="Q9JLV5"/>
<dbReference type="BioGRID" id="205013">
    <property type="interactions" value="131"/>
</dbReference>
<dbReference type="CORUM" id="Q9JLV5"/>
<dbReference type="FunCoup" id="Q9JLV5">
    <property type="interactions" value="4304"/>
</dbReference>
<dbReference type="IntAct" id="Q9JLV5">
    <property type="interactions" value="50"/>
</dbReference>
<dbReference type="STRING" id="10090.ENSMUSP00000130738"/>
<dbReference type="GlyGen" id="Q9JLV5">
    <property type="glycosylation" value="3 sites, 1 N-linked glycan (2 sites), 1 O-linked glycan (1 site)"/>
</dbReference>
<dbReference type="iPTMnet" id="Q9JLV5"/>
<dbReference type="PhosphoSitePlus" id="Q9JLV5"/>
<dbReference type="SwissPalm" id="Q9JLV5"/>
<dbReference type="jPOST" id="Q9JLV5"/>
<dbReference type="PaxDb" id="10090-ENSMUSP00000130738"/>
<dbReference type="ProteomicsDB" id="285434"/>
<dbReference type="Pumba" id="Q9JLV5"/>
<dbReference type="Antibodypedia" id="3632">
    <property type="antibodies" value="405 antibodies from 40 providers"/>
</dbReference>
<dbReference type="DNASU" id="26554"/>
<dbReference type="Ensembl" id="ENSMUST00000163119.8">
    <property type="protein sequence ID" value="ENSMUSP00000130738.2"/>
    <property type="gene ID" value="ENSMUSG00000004364.15"/>
</dbReference>
<dbReference type="GeneID" id="26554"/>
<dbReference type="KEGG" id="mmu:26554"/>
<dbReference type="UCSC" id="uc007brc.1">
    <property type="organism name" value="mouse"/>
</dbReference>
<dbReference type="AGR" id="MGI:1347360"/>
<dbReference type="CTD" id="8452"/>
<dbReference type="MGI" id="MGI:1347360">
    <property type="gene designation" value="Cul3"/>
</dbReference>
<dbReference type="VEuPathDB" id="HostDB:ENSMUSG00000004364"/>
<dbReference type="eggNOG" id="KOG2166">
    <property type="taxonomic scope" value="Eukaryota"/>
</dbReference>
<dbReference type="GeneTree" id="ENSGT00940000155066"/>
<dbReference type="HOGENOM" id="CLU_004747_7_1_1"/>
<dbReference type="InParanoid" id="Q9JLV5"/>
<dbReference type="OMA" id="MFKDMTI"/>
<dbReference type="OrthoDB" id="27073at2759"/>
<dbReference type="PhylomeDB" id="Q9JLV5"/>
<dbReference type="TreeFam" id="TF105858"/>
<dbReference type="Reactome" id="R-MMU-4641258">
    <property type="pathway name" value="Degradation of DVL"/>
</dbReference>
<dbReference type="Reactome" id="R-MMU-5632684">
    <property type="pathway name" value="Hedgehog 'on' state"/>
</dbReference>
<dbReference type="Reactome" id="R-MMU-5658442">
    <property type="pathway name" value="Regulation of RAS by GAPs"/>
</dbReference>
<dbReference type="Reactome" id="R-MMU-8951664">
    <property type="pathway name" value="Neddylation"/>
</dbReference>
<dbReference type="Reactome" id="R-MMU-9013418">
    <property type="pathway name" value="RHOBTB2 GTPase cycle"/>
</dbReference>
<dbReference type="Reactome" id="R-MMU-9013422">
    <property type="pathway name" value="RHOBTB1 GTPase cycle"/>
</dbReference>
<dbReference type="Reactome" id="R-MMU-9706019">
    <property type="pathway name" value="RHOBTB3 ATPase cycle"/>
</dbReference>
<dbReference type="Reactome" id="R-MMU-9755511">
    <property type="pathway name" value="KEAP1-NFE2L2 pathway"/>
</dbReference>
<dbReference type="Reactome" id="R-MMU-983168">
    <property type="pathway name" value="Antigen processing: Ubiquitination &amp; Proteasome degradation"/>
</dbReference>
<dbReference type="UniPathway" id="UPA00143"/>
<dbReference type="BioGRID-ORCS" id="26554">
    <property type="hits" value="32 hits in 79 CRISPR screens"/>
</dbReference>
<dbReference type="ChiTaRS" id="Cul3">
    <property type="organism name" value="mouse"/>
</dbReference>
<dbReference type="EvolutionaryTrace" id="Q9JLV5"/>
<dbReference type="PRO" id="PR:Q9JLV5"/>
<dbReference type="Proteomes" id="UP000000589">
    <property type="component" value="Chromosome 1"/>
</dbReference>
<dbReference type="RNAct" id="Q9JLV5">
    <property type="molecule type" value="protein"/>
</dbReference>
<dbReference type="Bgee" id="ENSMUSG00000004364">
    <property type="expression patterns" value="Expressed in spermatid and 259 other cell types or tissues"/>
</dbReference>
<dbReference type="ExpressionAtlas" id="Q9JLV5">
    <property type="expression patterns" value="baseline and differential"/>
</dbReference>
<dbReference type="GO" id="GO:0005813">
    <property type="term" value="C:centrosome"/>
    <property type="evidence" value="ECO:0000250"/>
    <property type="project" value="UniProtKB"/>
</dbReference>
<dbReference type="GO" id="GO:0031463">
    <property type="term" value="C:Cul3-RING ubiquitin ligase complex"/>
    <property type="evidence" value="ECO:0000250"/>
    <property type="project" value="UniProtKB"/>
</dbReference>
<dbReference type="GO" id="GO:0005737">
    <property type="term" value="C:cytoplasm"/>
    <property type="evidence" value="ECO:0000314"/>
    <property type="project" value="MGI"/>
</dbReference>
<dbReference type="GO" id="GO:0098978">
    <property type="term" value="C:glutamatergic synapse"/>
    <property type="evidence" value="ECO:0000314"/>
    <property type="project" value="SynGO"/>
</dbReference>
<dbReference type="GO" id="GO:0005794">
    <property type="term" value="C:Golgi apparatus"/>
    <property type="evidence" value="ECO:0000314"/>
    <property type="project" value="MGI"/>
</dbReference>
<dbReference type="GO" id="GO:0072686">
    <property type="term" value="C:mitotic spindle"/>
    <property type="evidence" value="ECO:0000250"/>
    <property type="project" value="UniProtKB"/>
</dbReference>
<dbReference type="GO" id="GO:0005634">
    <property type="term" value="C:nucleus"/>
    <property type="evidence" value="ECO:0000314"/>
    <property type="project" value="MGI"/>
</dbReference>
<dbReference type="GO" id="GO:0005886">
    <property type="term" value="C:plasma membrane"/>
    <property type="evidence" value="ECO:0000250"/>
    <property type="project" value="UniProtKB"/>
</dbReference>
<dbReference type="GO" id="GO:0005827">
    <property type="term" value="C:polar microtubule"/>
    <property type="evidence" value="ECO:0000250"/>
    <property type="project" value="UniProtKB"/>
</dbReference>
<dbReference type="GO" id="GO:0098794">
    <property type="term" value="C:postsynapse"/>
    <property type="evidence" value="ECO:0007669"/>
    <property type="project" value="GOC"/>
</dbReference>
<dbReference type="GO" id="GO:0036126">
    <property type="term" value="C:sperm flagellum"/>
    <property type="evidence" value="ECO:0000250"/>
    <property type="project" value="UniProtKB"/>
</dbReference>
<dbReference type="GO" id="GO:0000922">
    <property type="term" value="C:spindle pole"/>
    <property type="evidence" value="ECO:0000250"/>
    <property type="project" value="UniProtKB"/>
</dbReference>
<dbReference type="GO" id="GO:0030332">
    <property type="term" value="F:cyclin binding"/>
    <property type="evidence" value="ECO:0000353"/>
    <property type="project" value="MGI"/>
</dbReference>
<dbReference type="GO" id="GO:0042802">
    <property type="term" value="F:identical protein binding"/>
    <property type="evidence" value="ECO:0000353"/>
    <property type="project" value="MGI"/>
</dbReference>
<dbReference type="GO" id="GO:0005112">
    <property type="term" value="F:Notch binding"/>
    <property type="evidence" value="ECO:0000266"/>
    <property type="project" value="MGI"/>
</dbReference>
<dbReference type="GO" id="GO:0031208">
    <property type="term" value="F:POZ domain binding"/>
    <property type="evidence" value="ECO:0000250"/>
    <property type="project" value="UniProtKB"/>
</dbReference>
<dbReference type="GO" id="GO:0160072">
    <property type="term" value="F:ubiquitin ligase complex scaffold activity"/>
    <property type="evidence" value="ECO:0007669"/>
    <property type="project" value="Ensembl"/>
</dbReference>
<dbReference type="GO" id="GO:0061630">
    <property type="term" value="F:ubiquitin protein ligase activity"/>
    <property type="evidence" value="ECO:0007669"/>
    <property type="project" value="Ensembl"/>
</dbReference>
<dbReference type="GO" id="GO:0031625">
    <property type="term" value="F:ubiquitin protein ligase binding"/>
    <property type="evidence" value="ECO:0007669"/>
    <property type="project" value="Ensembl"/>
</dbReference>
<dbReference type="GO" id="GO:0031145">
    <property type="term" value="P:anaphase-promoting complex-dependent catabolic process"/>
    <property type="evidence" value="ECO:0000250"/>
    <property type="project" value="MGI"/>
</dbReference>
<dbReference type="GO" id="GO:0016477">
    <property type="term" value="P:cell migration"/>
    <property type="evidence" value="ECO:0000250"/>
    <property type="project" value="UniProtKB"/>
</dbReference>
<dbReference type="GO" id="GO:0000902">
    <property type="term" value="P:cell morphogenesis"/>
    <property type="evidence" value="ECO:0000315"/>
    <property type="project" value="MGI"/>
</dbReference>
<dbReference type="GO" id="GO:0030030">
    <property type="term" value="P:cell projection organization"/>
    <property type="evidence" value="ECO:0007669"/>
    <property type="project" value="UniProtKB-KW"/>
</dbReference>
<dbReference type="GO" id="GO:0071230">
    <property type="term" value="P:cellular response to amino acid stimulus"/>
    <property type="evidence" value="ECO:0007669"/>
    <property type="project" value="Ensembl"/>
</dbReference>
<dbReference type="GO" id="GO:0034599">
    <property type="term" value="P:cellular response to oxidative stress"/>
    <property type="evidence" value="ECO:0007669"/>
    <property type="project" value="Ensembl"/>
</dbReference>
<dbReference type="GO" id="GO:0048208">
    <property type="term" value="P:COPII vesicle coating"/>
    <property type="evidence" value="ECO:0000250"/>
    <property type="project" value="UniProtKB"/>
</dbReference>
<dbReference type="GO" id="GO:0040016">
    <property type="term" value="P:embryonic cleavage"/>
    <property type="evidence" value="ECO:0000315"/>
    <property type="project" value="UniProtKB"/>
</dbReference>
<dbReference type="GO" id="GO:0006888">
    <property type="term" value="P:endoplasmic reticulum to Golgi vesicle-mediated transport"/>
    <property type="evidence" value="ECO:0000250"/>
    <property type="project" value="UniProtKB"/>
</dbReference>
<dbReference type="GO" id="GO:0044346">
    <property type="term" value="P:fibroblast apoptotic process"/>
    <property type="evidence" value="ECO:0000315"/>
    <property type="project" value="MGI"/>
</dbReference>
<dbReference type="GO" id="GO:0007369">
    <property type="term" value="P:gastrulation"/>
    <property type="evidence" value="ECO:0000315"/>
    <property type="project" value="MGI"/>
</dbReference>
<dbReference type="GO" id="GO:0010467">
    <property type="term" value="P:gene expression"/>
    <property type="evidence" value="ECO:0000315"/>
    <property type="project" value="MGI"/>
</dbReference>
<dbReference type="GO" id="GO:0001701">
    <property type="term" value="P:in utero embryonic development"/>
    <property type="evidence" value="ECO:0000315"/>
    <property type="project" value="MGI"/>
</dbReference>
<dbReference type="GO" id="GO:0006954">
    <property type="term" value="P:inflammatory response"/>
    <property type="evidence" value="ECO:0000315"/>
    <property type="project" value="MGI"/>
</dbReference>
<dbReference type="GO" id="GO:0007229">
    <property type="term" value="P:integrin-mediated signaling pathway"/>
    <property type="evidence" value="ECO:0000315"/>
    <property type="project" value="UniProtKB"/>
</dbReference>
<dbReference type="GO" id="GO:0001822">
    <property type="term" value="P:kidney development"/>
    <property type="evidence" value="ECO:0000315"/>
    <property type="project" value="MGI"/>
</dbReference>
<dbReference type="GO" id="GO:0072576">
    <property type="term" value="P:liver morphogenesis"/>
    <property type="evidence" value="ECO:0000315"/>
    <property type="project" value="MGI"/>
</dbReference>
<dbReference type="GO" id="GO:0000278">
    <property type="term" value="P:mitotic cell cycle"/>
    <property type="evidence" value="ECO:0000315"/>
    <property type="project" value="MGI"/>
</dbReference>
<dbReference type="GO" id="GO:0007080">
    <property type="term" value="P:mitotic metaphase chromosome alignment"/>
    <property type="evidence" value="ECO:0000250"/>
    <property type="project" value="UniProtKB"/>
</dbReference>
<dbReference type="GO" id="GO:0035024">
    <property type="term" value="P:negative regulation of Rho protein signal transduction"/>
    <property type="evidence" value="ECO:0000250"/>
    <property type="project" value="UniProtKB"/>
</dbReference>
<dbReference type="GO" id="GO:0000122">
    <property type="term" value="P:negative regulation of transcription by RNA polymerase II"/>
    <property type="evidence" value="ECO:0000315"/>
    <property type="project" value="MGI"/>
</dbReference>
<dbReference type="GO" id="GO:0032480">
    <property type="term" value="P:negative regulation of type I interferon production"/>
    <property type="evidence" value="ECO:0007669"/>
    <property type="project" value="Ensembl"/>
</dbReference>
<dbReference type="GO" id="GO:0071630">
    <property type="term" value="P:nuclear protein quality control by the ubiquitin-proteasome system"/>
    <property type="evidence" value="ECO:0000250"/>
    <property type="project" value="UniProtKB"/>
</dbReference>
<dbReference type="GO" id="GO:0032467">
    <property type="term" value="P:positive regulation of cytokinesis"/>
    <property type="evidence" value="ECO:0000250"/>
    <property type="project" value="UniProtKB"/>
</dbReference>
<dbReference type="GO" id="GO:1901992">
    <property type="term" value="P:positive regulation of mitotic cell cycle phase transition"/>
    <property type="evidence" value="ECO:0000250"/>
    <property type="project" value="UniProtKB"/>
</dbReference>
<dbReference type="GO" id="GO:0045842">
    <property type="term" value="P:positive regulation of mitotic metaphase/anaphase transition"/>
    <property type="evidence" value="ECO:0000250"/>
    <property type="project" value="UniProtKB"/>
</dbReference>
<dbReference type="GO" id="GO:0031398">
    <property type="term" value="P:positive regulation of protein ubiquitination"/>
    <property type="evidence" value="ECO:0007669"/>
    <property type="project" value="Ensembl"/>
</dbReference>
<dbReference type="GO" id="GO:1904263">
    <property type="term" value="P:positive regulation of TORC1 signaling"/>
    <property type="evidence" value="ECO:0007669"/>
    <property type="project" value="Ensembl"/>
</dbReference>
<dbReference type="GO" id="GO:0043161">
    <property type="term" value="P:proteasome-mediated ubiquitin-dependent protein catabolic process"/>
    <property type="evidence" value="ECO:0000316"/>
    <property type="project" value="MGI"/>
</dbReference>
<dbReference type="GO" id="GO:0051865">
    <property type="term" value="P:protein autoubiquitination"/>
    <property type="evidence" value="ECO:0007669"/>
    <property type="project" value="Ensembl"/>
</dbReference>
<dbReference type="GO" id="GO:0030163">
    <property type="term" value="P:protein catabolic process"/>
    <property type="evidence" value="ECO:0000315"/>
    <property type="project" value="MGI"/>
</dbReference>
<dbReference type="GO" id="GO:0031648">
    <property type="term" value="P:protein destabilization"/>
    <property type="evidence" value="ECO:0007669"/>
    <property type="project" value="Ensembl"/>
</dbReference>
<dbReference type="GO" id="GO:0070936">
    <property type="term" value="P:protein K48-linked ubiquitination"/>
    <property type="evidence" value="ECO:0000250"/>
    <property type="project" value="UniProtKB"/>
</dbReference>
<dbReference type="GO" id="GO:0006513">
    <property type="term" value="P:protein monoubiquitination"/>
    <property type="evidence" value="ECO:0000250"/>
    <property type="project" value="UniProtKB"/>
</dbReference>
<dbReference type="GO" id="GO:0000209">
    <property type="term" value="P:protein polyubiquitination"/>
    <property type="evidence" value="ECO:0000314"/>
    <property type="project" value="MGI"/>
</dbReference>
<dbReference type="GO" id="GO:0016567">
    <property type="term" value="P:protein ubiquitination"/>
    <property type="evidence" value="ECO:0000315"/>
    <property type="project" value="MGI"/>
</dbReference>
<dbReference type="GO" id="GO:1900076">
    <property type="term" value="P:regulation of cellular response to insulin stimulus"/>
    <property type="evidence" value="ECO:0007669"/>
    <property type="project" value="Ensembl"/>
</dbReference>
<dbReference type="GO" id="GO:0006357">
    <property type="term" value="P:regulation of transcription by RNA polymerase II"/>
    <property type="evidence" value="ECO:0000316"/>
    <property type="project" value="MGI"/>
</dbReference>
<dbReference type="GO" id="GO:0140252">
    <property type="term" value="P:regulation protein catabolic process at postsynapse"/>
    <property type="evidence" value="ECO:0000314"/>
    <property type="project" value="SynGO"/>
</dbReference>
<dbReference type="GO" id="GO:0017145">
    <property type="term" value="P:stem cell division"/>
    <property type="evidence" value="ECO:0000315"/>
    <property type="project" value="UniProtKB"/>
</dbReference>
<dbReference type="GO" id="GO:0043149">
    <property type="term" value="P:stress fiber assembly"/>
    <property type="evidence" value="ECO:0000250"/>
    <property type="project" value="UniProtKB"/>
</dbReference>
<dbReference type="GO" id="GO:0001831">
    <property type="term" value="P:trophectodermal cellular morphogenesis"/>
    <property type="evidence" value="ECO:0000315"/>
    <property type="project" value="MGI"/>
</dbReference>
<dbReference type="GO" id="GO:0006511">
    <property type="term" value="P:ubiquitin-dependent protein catabolic process"/>
    <property type="evidence" value="ECO:0000250"/>
    <property type="project" value="UniProtKB"/>
</dbReference>
<dbReference type="GO" id="GO:0016055">
    <property type="term" value="P:Wnt signaling pathway"/>
    <property type="evidence" value="ECO:0000314"/>
    <property type="project" value="MGI"/>
</dbReference>
<dbReference type="FunFam" id="1.10.10.10:FF:000091">
    <property type="entry name" value="Cullin 3"/>
    <property type="match status" value="1"/>
</dbReference>
<dbReference type="FunFam" id="1.20.1310.10:FF:000001">
    <property type="entry name" value="Cullin 3"/>
    <property type="match status" value="1"/>
</dbReference>
<dbReference type="FunFam" id="1.20.1310.10:FF:000005">
    <property type="entry name" value="Cullin 3"/>
    <property type="match status" value="1"/>
</dbReference>
<dbReference type="FunFam" id="1.20.1310.10:FF:000006">
    <property type="entry name" value="Cullin 3"/>
    <property type="match status" value="1"/>
</dbReference>
<dbReference type="FunFam" id="1.20.1310.10:FF:000002">
    <property type="entry name" value="cullin-3 isoform X1"/>
    <property type="match status" value="1"/>
</dbReference>
<dbReference type="FunFam" id="3.30.230.130:FF:000002">
    <property type="entry name" value="cullin-3 isoform X1"/>
    <property type="match status" value="1"/>
</dbReference>
<dbReference type="Gene3D" id="1.20.1310.10">
    <property type="entry name" value="Cullin Repeats"/>
    <property type="match status" value="4"/>
</dbReference>
<dbReference type="Gene3D" id="3.30.230.130">
    <property type="entry name" value="Cullin, Chain C, Domain 2"/>
    <property type="match status" value="1"/>
</dbReference>
<dbReference type="Gene3D" id="1.10.10.10">
    <property type="entry name" value="Winged helix-like DNA-binding domain superfamily/Winged helix DNA-binding domain"/>
    <property type="match status" value="1"/>
</dbReference>
<dbReference type="InterPro" id="IPR045093">
    <property type="entry name" value="Cullin"/>
</dbReference>
<dbReference type="InterPro" id="IPR016157">
    <property type="entry name" value="Cullin_CS"/>
</dbReference>
<dbReference type="InterPro" id="IPR016158">
    <property type="entry name" value="Cullin_homology"/>
</dbReference>
<dbReference type="InterPro" id="IPR036317">
    <property type="entry name" value="Cullin_homology_sf"/>
</dbReference>
<dbReference type="InterPro" id="IPR001373">
    <property type="entry name" value="Cullin_N"/>
</dbReference>
<dbReference type="InterPro" id="IPR019559">
    <property type="entry name" value="Cullin_neddylation_domain"/>
</dbReference>
<dbReference type="InterPro" id="IPR016159">
    <property type="entry name" value="Cullin_repeat-like_dom_sf"/>
</dbReference>
<dbReference type="InterPro" id="IPR036388">
    <property type="entry name" value="WH-like_DNA-bd_sf"/>
</dbReference>
<dbReference type="InterPro" id="IPR036390">
    <property type="entry name" value="WH_DNA-bd_sf"/>
</dbReference>
<dbReference type="PANTHER" id="PTHR11932">
    <property type="entry name" value="CULLIN"/>
    <property type="match status" value="1"/>
</dbReference>
<dbReference type="Pfam" id="PF00888">
    <property type="entry name" value="Cullin"/>
    <property type="match status" value="1"/>
</dbReference>
<dbReference type="Pfam" id="PF10557">
    <property type="entry name" value="Cullin_Nedd8"/>
    <property type="match status" value="1"/>
</dbReference>
<dbReference type="SMART" id="SM00182">
    <property type="entry name" value="CULLIN"/>
    <property type="match status" value="1"/>
</dbReference>
<dbReference type="SMART" id="SM00884">
    <property type="entry name" value="Cullin_Nedd8"/>
    <property type="match status" value="1"/>
</dbReference>
<dbReference type="SUPFAM" id="SSF75632">
    <property type="entry name" value="Cullin homology domain"/>
    <property type="match status" value="1"/>
</dbReference>
<dbReference type="SUPFAM" id="SSF74788">
    <property type="entry name" value="Cullin repeat-like"/>
    <property type="match status" value="1"/>
</dbReference>
<dbReference type="SUPFAM" id="SSF46785">
    <property type="entry name" value="Winged helix' DNA-binding domain"/>
    <property type="match status" value="1"/>
</dbReference>
<dbReference type="PROSITE" id="PS01256">
    <property type="entry name" value="CULLIN_1"/>
    <property type="match status" value="1"/>
</dbReference>
<dbReference type="PROSITE" id="PS50069">
    <property type="entry name" value="CULLIN_2"/>
    <property type="match status" value="1"/>
</dbReference>
<protein>
    <recommendedName>
        <fullName>Cullin-3</fullName>
        <shortName>CUL-3</shortName>
    </recommendedName>
</protein>
<feature type="initiator methionine" description="Removed" evidence="2">
    <location>
        <position position="1"/>
    </location>
</feature>
<feature type="chain" id="PRO_0000119794" description="Cullin-3">
    <location>
        <begin position="2"/>
        <end position="768"/>
    </location>
</feature>
<feature type="domain" description="Cullin neddylation" evidence="3">
    <location>
        <begin position="698"/>
        <end position="760"/>
    </location>
</feature>
<feature type="region of interest" description="Interaction with KLHL18" evidence="2">
    <location>
        <begin position="2"/>
        <end position="41"/>
    </location>
</feature>
<feature type="region of interest" description="Disordered" evidence="5">
    <location>
        <begin position="677"/>
        <end position="698"/>
    </location>
</feature>
<feature type="compositionally biased region" description="Basic and acidic residues" evidence="5">
    <location>
        <begin position="682"/>
        <end position="698"/>
    </location>
</feature>
<feature type="modified residue" description="N-acetylserine" evidence="2">
    <location>
        <position position="2"/>
    </location>
</feature>
<feature type="modified residue" description="Phosphoserine" evidence="2">
    <location>
        <position position="585"/>
    </location>
</feature>
<feature type="cross-link" description="Glycyl lysine isopeptide (Lys-Gly) (interchain with G-Cter in NEDD8)" evidence="1">
    <location>
        <position position="712"/>
    </location>
</feature>
<feature type="turn" evidence="16">
    <location>
        <begin position="699"/>
        <end position="701"/>
    </location>
</feature>
<feature type="helix" evidence="16">
    <location>
        <begin position="702"/>
        <end position="714"/>
    </location>
</feature>
<feature type="strand" evidence="16">
    <location>
        <begin position="716"/>
        <end position="718"/>
    </location>
</feature>
<feature type="helix" evidence="16">
    <location>
        <begin position="719"/>
        <end position="729"/>
    </location>
</feature>
<feature type="helix" evidence="16">
    <location>
        <begin position="738"/>
        <end position="750"/>
    </location>
</feature>
<feature type="strand" evidence="16">
    <location>
        <begin position="753"/>
        <end position="756"/>
    </location>
</feature>
<feature type="strand" evidence="16">
    <location>
        <begin position="761"/>
        <end position="766"/>
    </location>
</feature>
<sequence>MSNLSKGTGSRKDTKMRIRAFPMTMDEKYVNSIWDLLKNAIQEIQRKNNSGLSFEELYRNAYTMVLHKHGEKLYTGLREVVTEHLINKVREDVLNSLNNNFLQTLNQAWNDHQTAMVMIRDILMYMDRVYVQQNNVENVYNLGLIIFRDQVVRYGCIRDHLRQTLLDMIARERKGEVVDRGAIRNACQMLMILGLEGRSVYEEDFEAPFLEMSAEFFQMESQKFLAENSASVYIKKVEARINEEIERVMHCLDKSTEEPIVKVVERELISKHMKTIVEMENSGLVHMLKNGKTEDLACMYKLFSRVPNGLKTMCECMSCYLREQGKALVSEEGEGKNPVDYIQGLLDLKSRFDRFLQESFNNDRLFKQTIAGDFEYFLNLNSRSPEYLSLFIDDKLKKGVKGLTEQEVETILDKAMVLFRFMQEKDVFERYYKQHLARRLLTNKSVSDDSEKNMISKLKTECGCQFTSKLEGMFRDMSISNTTMDEFRQHLQATGVSLGGVDLTVRVLTTGYWPTQSATPKCNIPPAPRHAFEIFRRFYLAKHSGRQLTLQHHMGSADLNATFYGPVKKEDGSEVGVGGAQVTGSNTRKHILQVSTFQMTILMLFNNREKYTFEEIQQETDIPERELVRALQSLACGKPTQRVLTKEPKSKEIESGHIFTVNDQFTSKLHRVKIQTVAAKQGESDPERKETRQKVDDDRKHEIEAAIVRIMKSRKKMQHNVLVAEVTQQLKARFLPSPVVIKKRIEGLIEREYLARTPEDRKVYTYVA</sequence>
<name>CUL3_MOUSE</name>